<comment type="function">
    <text evidence="1">Potent inhibitor of insect, but not mammalian, voltage-gated calcium channels (Cav).</text>
</comment>
<comment type="subcellular location">
    <subcellularLocation>
        <location evidence="3 4">Secreted</location>
    </subcellularLocation>
</comment>
<comment type="tissue specificity">
    <text evidence="7 8">Expressed by the venom gland.</text>
</comment>
<comment type="domain">
    <text evidence="6">The presence of a 'disulfide through disulfide knot' structurally defines this protein as a knottin.</text>
</comment>
<comment type="similarity">
    <text evidence="6">Belongs to the neurotoxin 15 family. 02 (omega-actx) subfamily.</text>
</comment>
<protein>
    <recommendedName>
        <fullName>Omega-hexatoxin-Hi2a</fullName>
        <shortName>Omega-HXTX-Hi2a</shortName>
    </recommendedName>
    <alternativeName>
        <fullName>Omega-atracotoxin-Hi2a</fullName>
        <shortName>Omega-AcTx-Hi2a</shortName>
    </alternativeName>
    <alternativeName>
        <fullName evidence="5">SF10 peptide</fullName>
    </alternativeName>
</protein>
<feature type="signal peptide" evidence="2">
    <location>
        <begin position="1"/>
        <end position="23"/>
    </location>
</feature>
<feature type="propeptide" id="PRO_0000035545" evidence="7">
    <location>
        <begin position="24"/>
        <end position="56"/>
    </location>
</feature>
<feature type="chain" id="PRO_0000035546" description="Omega-hexatoxin-Hi2a" evidence="7">
    <location>
        <begin position="57"/>
        <end position="98"/>
    </location>
</feature>
<feature type="propeptide" id="PRO_0000035547" evidence="7">
    <location>
        <begin position="100"/>
        <end position="102"/>
    </location>
</feature>
<feature type="modified residue" description="Leucine amide" evidence="6">
    <location>
        <position position="98"/>
    </location>
</feature>
<feature type="disulfide bond" evidence="1">
    <location>
        <begin position="61"/>
        <end position="75"/>
    </location>
</feature>
<feature type="disulfide bond" evidence="1">
    <location>
        <begin position="68"/>
        <end position="81"/>
    </location>
</feature>
<feature type="disulfide bond" evidence="1">
    <location>
        <begin position="74"/>
        <end position="86"/>
    </location>
</feature>
<organism>
    <name type="scientific">Hadronyche infensa</name>
    <name type="common">Fraser island funnel-web spider</name>
    <name type="synonym">Atrax infensus</name>
    <dbReference type="NCBI Taxonomy" id="153481"/>
    <lineage>
        <taxon>Eukaryota</taxon>
        <taxon>Metazoa</taxon>
        <taxon>Ecdysozoa</taxon>
        <taxon>Arthropoda</taxon>
        <taxon>Chelicerata</taxon>
        <taxon>Arachnida</taxon>
        <taxon>Araneae</taxon>
        <taxon>Mygalomorphae</taxon>
        <taxon>Hexathelidae</taxon>
        <taxon>Hadronyche</taxon>
    </lineage>
</organism>
<accession>Q9BJV9</accession>
<accession>A0A1D0BN54</accession>
<reference key="1">
    <citation type="journal article" date="2001" name="J. Biol. Chem.">
        <title>Discovery and structure of a potent and highly specific blocker of insect calcium channels.</title>
        <authorList>
            <person name="Wang X.-H."/>
            <person name="Connor M."/>
            <person name="Wilson D."/>
            <person name="Wilson H.I."/>
            <person name="Nicholson G.M."/>
            <person name="Smith R."/>
            <person name="Shaw D."/>
            <person name="Mackay J.P."/>
            <person name="Alewood P.F."/>
            <person name="Christie M.J."/>
            <person name="King G.F."/>
        </authorList>
    </citation>
    <scope>NUCLEOTIDE SEQUENCE [MRNA]</scope>
    <scope>PROTEIN SEQUENCE OF 57-68</scope>
    <scope>SUBCELLULAR LOCATION</scope>
    <source>
        <tissue>Venom</tissue>
        <tissue>Venom gland</tissue>
    </source>
</reference>
<reference key="2">
    <citation type="journal article" date="2020" name="Proc. Natl. Acad. Sci. U.S.A.">
        <title>Structural venomics reveals evolution of a complex venom by duplication and diversification of an ancient peptide-encoding gene.</title>
        <authorList>
            <person name="Pineda S.S."/>
            <person name="Chin Y.K."/>
            <person name="Undheim E.A.B."/>
            <person name="Senff S."/>
            <person name="Mobli M."/>
            <person name="Dauly C."/>
            <person name="Escoubas P."/>
            <person name="Nicholson G.M."/>
            <person name="Kaas Q."/>
            <person name="Guo S."/>
            <person name="Herzig V."/>
            <person name="Mattick J.S."/>
            <person name="King G.F."/>
        </authorList>
    </citation>
    <scope>NUCLEOTIDE SEQUENCE [MRNA]</scope>
    <scope>IDENTIFICATION BY MASS SPECTROMETRY</scope>
    <scope>SUBCELLULAR LOCATION</scope>
    <source>
        <tissue>Venom</tissue>
        <tissue>Venom gland</tissue>
    </source>
</reference>
<reference evidence="9" key="3">
    <citation type="thesis" date="2012" institute="The University of Queensland" country="Australia">
        <title>Probing the chemical diversity of venom from the Australian Funnel-web spider Hadronyche infensa.</title>
        <authorList>
            <person name="Pineda S.S."/>
        </authorList>
    </citation>
    <scope>NUCLEOTIDE SEQUENCE [MRNA]</scope>
    <source>
        <tissue>Venom gland</tissue>
    </source>
</reference>
<reference evidence="9" key="4">
    <citation type="submission" date="2014-07" db="EMBL/GenBank/DDBJ databases">
        <authorList>
            <person name="Zhang J.E."/>
            <person name="Yang H."/>
            <person name="Guo J."/>
            <person name="Deng Z."/>
            <person name="Luo H."/>
            <person name="Luo M."/>
            <person name="Zhao B."/>
        </authorList>
    </citation>
    <scope>NUCLEOTIDE SEQUENCE [MRNA]</scope>
    <source>
        <tissue>Venom gland</tissue>
    </source>
</reference>
<keyword id="KW-0027">Amidation</keyword>
<keyword id="KW-0108">Calcium channel impairing toxin</keyword>
<keyword id="KW-0903">Direct protein sequencing</keyword>
<keyword id="KW-1015">Disulfide bond</keyword>
<keyword id="KW-0872">Ion channel impairing toxin</keyword>
<keyword id="KW-0960">Knottin</keyword>
<keyword id="KW-0528">Neurotoxin</keyword>
<keyword id="KW-0964">Secreted</keyword>
<keyword id="KW-0732">Signal</keyword>
<keyword id="KW-0800">Toxin</keyword>
<keyword id="KW-1218">Voltage-gated calcium channel impairing toxin</keyword>
<proteinExistence type="evidence at protein level"/>
<dbReference type="EMBL" id="AF329443">
    <property type="protein sequence ID" value="AAK17946.1"/>
    <property type="molecule type" value="mRNA"/>
</dbReference>
<dbReference type="EMBL" id="HACE01000003">
    <property type="protein sequence ID" value="CDZ18787.1"/>
    <property type="molecule type" value="Transcribed_RNA"/>
</dbReference>
<dbReference type="ArachnoServer" id="AS000597">
    <property type="toxin name" value="omega-hexatoxin-Hi2a"/>
</dbReference>
<dbReference type="GO" id="GO:0005576">
    <property type="term" value="C:extracellular region"/>
    <property type="evidence" value="ECO:0007669"/>
    <property type="project" value="UniProtKB-SubCell"/>
</dbReference>
<dbReference type="GO" id="GO:0005246">
    <property type="term" value="F:calcium channel regulator activity"/>
    <property type="evidence" value="ECO:0007669"/>
    <property type="project" value="UniProtKB-KW"/>
</dbReference>
<dbReference type="GO" id="GO:0019871">
    <property type="term" value="F:sodium channel inhibitor activity"/>
    <property type="evidence" value="ECO:0007669"/>
    <property type="project" value="InterPro"/>
</dbReference>
<dbReference type="GO" id="GO:0090729">
    <property type="term" value="F:toxin activity"/>
    <property type="evidence" value="ECO:0007669"/>
    <property type="project" value="UniProtKB-KW"/>
</dbReference>
<dbReference type="Gene3D" id="4.10.40.10">
    <property type="match status" value="1"/>
</dbReference>
<dbReference type="InterPro" id="IPR013139">
    <property type="entry name" value="Omega_atracotoxin_CS2"/>
</dbReference>
<dbReference type="InterPro" id="IPR012628">
    <property type="entry name" value="Toxin_23"/>
</dbReference>
<dbReference type="Pfam" id="PF08093">
    <property type="entry name" value="Toxin_23"/>
    <property type="match status" value="1"/>
</dbReference>
<dbReference type="SUPFAM" id="SSF57059">
    <property type="entry name" value="omega toxin-like"/>
    <property type="match status" value="1"/>
</dbReference>
<dbReference type="PROSITE" id="PS60017">
    <property type="entry name" value="OMEGA_ACTX_2"/>
    <property type="match status" value="1"/>
</dbReference>
<evidence type="ECO:0000250" key="1">
    <source>
        <dbReference type="UniProtKB" id="P82852"/>
    </source>
</evidence>
<evidence type="ECO:0000255" key="2"/>
<evidence type="ECO:0000269" key="3">
    <source>
    </source>
</evidence>
<evidence type="ECO:0000269" key="4">
    <source>
    </source>
</evidence>
<evidence type="ECO:0000303" key="5">
    <source>
    </source>
</evidence>
<evidence type="ECO:0000305" key="6"/>
<evidence type="ECO:0000305" key="7">
    <source>
    </source>
</evidence>
<evidence type="ECO:0000305" key="8">
    <source>
    </source>
</evidence>
<evidence type="ECO:0000312" key="9">
    <source>
        <dbReference type="EMBL" id="CDZ18787.1"/>
    </source>
</evidence>
<sequence length="102" mass="10693">MKFSKLSLTLALILTQALLVVCGKINEDFMENGLESHALHDEIRKPIDTEKADAERGVLDCVVNTLGCSSDKDCCGMTPSCTLGICAPSVGGIVGGLLGRAL</sequence>
<name>TO2A_HADIN</name>